<evidence type="ECO:0000255" key="1">
    <source>
        <dbReference type="HAMAP-Rule" id="MF_00009"/>
    </source>
</evidence>
<comment type="function">
    <text evidence="1">Single strand-specific metallo-endoribonuclease involved in late-stage 70S ribosome quality control and in maturation of the 3' terminus of the 16S rRNA.</text>
</comment>
<comment type="cofactor">
    <cofactor evidence="1">
        <name>Zn(2+)</name>
        <dbReference type="ChEBI" id="CHEBI:29105"/>
    </cofactor>
    <text evidence="1">Binds 1 zinc ion.</text>
</comment>
<comment type="subcellular location">
    <subcellularLocation>
        <location evidence="1">Cytoplasm</location>
    </subcellularLocation>
</comment>
<comment type="similarity">
    <text evidence="1">Belongs to the endoribonuclease YbeY family.</text>
</comment>
<protein>
    <recommendedName>
        <fullName evidence="1">Endoribonuclease YbeY</fullName>
        <ecNumber evidence="1">3.1.-.-</ecNumber>
    </recommendedName>
</protein>
<feature type="chain" id="PRO_1000200001" description="Endoribonuclease YbeY">
    <location>
        <begin position="1"/>
        <end position="166"/>
    </location>
</feature>
<feature type="binding site" evidence="1">
    <location>
        <position position="130"/>
    </location>
    <ligand>
        <name>Zn(2+)</name>
        <dbReference type="ChEBI" id="CHEBI:29105"/>
        <note>catalytic</note>
    </ligand>
</feature>
<feature type="binding site" evidence="1">
    <location>
        <position position="134"/>
    </location>
    <ligand>
        <name>Zn(2+)</name>
        <dbReference type="ChEBI" id="CHEBI:29105"/>
        <note>catalytic</note>
    </ligand>
</feature>
<feature type="binding site" evidence="1">
    <location>
        <position position="140"/>
    </location>
    <ligand>
        <name>Zn(2+)</name>
        <dbReference type="ChEBI" id="CHEBI:29105"/>
        <note>catalytic</note>
    </ligand>
</feature>
<sequence length="166" mass="19407">MYIEMIDETGLVSQEIMEQTLDLLNFAARKTGKDEKEMSVTFVTNERSHELNLEYRDTDRPTDVISLEYKPESPILFDERDLEENPDLAEMLSEFDAYIGELFISIDKAKEQAQEYGHSFEREMGFLAVHGFLHINGYDHYTPEEEKEMFTLQEEILTAYGLTRQS</sequence>
<organism>
    <name type="scientific">Streptococcus uberis (strain ATCC BAA-854 / 0140J)</name>
    <dbReference type="NCBI Taxonomy" id="218495"/>
    <lineage>
        <taxon>Bacteria</taxon>
        <taxon>Bacillati</taxon>
        <taxon>Bacillota</taxon>
        <taxon>Bacilli</taxon>
        <taxon>Lactobacillales</taxon>
        <taxon>Streptococcaceae</taxon>
        <taxon>Streptococcus</taxon>
    </lineage>
</organism>
<reference key="1">
    <citation type="journal article" date="2009" name="BMC Genomics">
        <title>Evidence for niche adaptation in the genome of the bovine pathogen Streptococcus uberis.</title>
        <authorList>
            <person name="Ward P.N."/>
            <person name="Holden M.T.G."/>
            <person name="Leigh J.A."/>
            <person name="Lennard N."/>
            <person name="Bignell A."/>
            <person name="Barron A."/>
            <person name="Clark L."/>
            <person name="Quail M.A."/>
            <person name="Woodward J."/>
            <person name="Barrell B.G."/>
            <person name="Egan S.A."/>
            <person name="Field T.R."/>
            <person name="Maskell D."/>
            <person name="Kehoe M."/>
            <person name="Dowson C.G."/>
            <person name="Chanter N."/>
            <person name="Whatmore A.M."/>
            <person name="Bentley S.D."/>
            <person name="Parkhill J."/>
        </authorList>
    </citation>
    <scope>NUCLEOTIDE SEQUENCE [LARGE SCALE GENOMIC DNA]</scope>
    <source>
        <strain>ATCC BAA-854 / 0140J</strain>
    </source>
</reference>
<name>YBEY_STRU0</name>
<proteinExistence type="inferred from homology"/>
<keyword id="KW-0963">Cytoplasm</keyword>
<keyword id="KW-0255">Endonuclease</keyword>
<keyword id="KW-0378">Hydrolase</keyword>
<keyword id="KW-0479">Metal-binding</keyword>
<keyword id="KW-0540">Nuclease</keyword>
<keyword id="KW-1185">Reference proteome</keyword>
<keyword id="KW-0690">Ribosome biogenesis</keyword>
<keyword id="KW-0698">rRNA processing</keyword>
<keyword id="KW-0862">Zinc</keyword>
<gene>
    <name evidence="1" type="primary">ybeY</name>
    <name type="ordered locus">SUB0490</name>
</gene>
<dbReference type="EC" id="3.1.-.-" evidence="1"/>
<dbReference type="EMBL" id="AM946015">
    <property type="protein sequence ID" value="CAR41204.1"/>
    <property type="molecule type" value="Genomic_DNA"/>
</dbReference>
<dbReference type="RefSeq" id="WP_012658022.1">
    <property type="nucleotide sequence ID" value="NC_012004.1"/>
</dbReference>
<dbReference type="SMR" id="B9DRF7"/>
<dbReference type="STRING" id="218495.SUB0490"/>
<dbReference type="GeneID" id="93825789"/>
<dbReference type="KEGG" id="sub:SUB0490"/>
<dbReference type="eggNOG" id="COG0319">
    <property type="taxonomic scope" value="Bacteria"/>
</dbReference>
<dbReference type="HOGENOM" id="CLU_106710_3_0_9"/>
<dbReference type="OrthoDB" id="9807740at2"/>
<dbReference type="Proteomes" id="UP000000449">
    <property type="component" value="Chromosome"/>
</dbReference>
<dbReference type="GO" id="GO:0005737">
    <property type="term" value="C:cytoplasm"/>
    <property type="evidence" value="ECO:0007669"/>
    <property type="project" value="UniProtKB-SubCell"/>
</dbReference>
<dbReference type="GO" id="GO:0004222">
    <property type="term" value="F:metalloendopeptidase activity"/>
    <property type="evidence" value="ECO:0007669"/>
    <property type="project" value="InterPro"/>
</dbReference>
<dbReference type="GO" id="GO:0004521">
    <property type="term" value="F:RNA endonuclease activity"/>
    <property type="evidence" value="ECO:0007669"/>
    <property type="project" value="UniProtKB-UniRule"/>
</dbReference>
<dbReference type="GO" id="GO:0008270">
    <property type="term" value="F:zinc ion binding"/>
    <property type="evidence" value="ECO:0007669"/>
    <property type="project" value="UniProtKB-UniRule"/>
</dbReference>
<dbReference type="GO" id="GO:0006364">
    <property type="term" value="P:rRNA processing"/>
    <property type="evidence" value="ECO:0007669"/>
    <property type="project" value="UniProtKB-UniRule"/>
</dbReference>
<dbReference type="Gene3D" id="3.40.390.30">
    <property type="entry name" value="Metalloproteases ('zincins'), catalytic domain"/>
    <property type="match status" value="1"/>
</dbReference>
<dbReference type="HAMAP" id="MF_00009">
    <property type="entry name" value="Endoribonucl_YbeY"/>
    <property type="match status" value="1"/>
</dbReference>
<dbReference type="InterPro" id="IPR023091">
    <property type="entry name" value="MetalPrtase_cat_dom_sf_prd"/>
</dbReference>
<dbReference type="InterPro" id="IPR002036">
    <property type="entry name" value="YbeY"/>
</dbReference>
<dbReference type="InterPro" id="IPR020549">
    <property type="entry name" value="YbeY_CS"/>
</dbReference>
<dbReference type="NCBIfam" id="TIGR00043">
    <property type="entry name" value="rRNA maturation RNase YbeY"/>
    <property type="match status" value="1"/>
</dbReference>
<dbReference type="PANTHER" id="PTHR46986">
    <property type="entry name" value="ENDORIBONUCLEASE YBEY, CHLOROPLASTIC"/>
    <property type="match status" value="1"/>
</dbReference>
<dbReference type="PANTHER" id="PTHR46986:SF1">
    <property type="entry name" value="ENDORIBONUCLEASE YBEY, CHLOROPLASTIC"/>
    <property type="match status" value="1"/>
</dbReference>
<dbReference type="Pfam" id="PF02130">
    <property type="entry name" value="YbeY"/>
    <property type="match status" value="1"/>
</dbReference>
<dbReference type="SUPFAM" id="SSF55486">
    <property type="entry name" value="Metalloproteases ('zincins'), catalytic domain"/>
    <property type="match status" value="1"/>
</dbReference>
<dbReference type="PROSITE" id="PS01306">
    <property type="entry name" value="UPF0054"/>
    <property type="match status" value="1"/>
</dbReference>
<accession>B9DRF7</accession>